<proteinExistence type="evidence at protein level"/>
<evidence type="ECO:0000256" key="1">
    <source>
        <dbReference type="SAM" id="MobiDB-lite"/>
    </source>
</evidence>
<evidence type="ECO:0000269" key="2">
    <source>
    </source>
</evidence>
<evidence type="ECO:0000269" key="3">
    <source>
    </source>
</evidence>
<evidence type="ECO:0000305" key="4"/>
<keyword id="KW-0509">mRNA transport</keyword>
<keyword id="KW-0539">Nucleus</keyword>
<keyword id="KW-0597">Phosphoprotein</keyword>
<keyword id="KW-1185">Reference proteome</keyword>
<keyword id="KW-0804">Transcription</keyword>
<keyword id="KW-0805">Transcription regulation</keyword>
<keyword id="KW-0813">Transport</keyword>
<organism>
    <name type="scientific">Schizosaccharomyces pombe (strain 972 / ATCC 24843)</name>
    <name type="common">Fission yeast</name>
    <dbReference type="NCBI Taxonomy" id="284812"/>
    <lineage>
        <taxon>Eukaryota</taxon>
        <taxon>Fungi</taxon>
        <taxon>Dikarya</taxon>
        <taxon>Ascomycota</taxon>
        <taxon>Taphrinomycotina</taxon>
        <taxon>Schizosaccharomycetes</taxon>
        <taxon>Schizosaccharomycetales</taxon>
        <taxon>Schizosaccharomycetaceae</taxon>
        <taxon>Schizosaccharomyces</taxon>
    </lineage>
</organism>
<protein>
    <recommendedName>
        <fullName>Transcription initiation factor TFIID subunit 7</fullName>
    </recommendedName>
    <alternativeName>
        <fullName>Transcription initiation factor TFIID 55 kDa subunit</fullName>
        <shortName>TAFII-55</shortName>
    </alternativeName>
</protein>
<feature type="chain" id="PRO_0000118884" description="Transcription initiation factor TFIID subunit 7">
    <location>
        <begin position="1"/>
        <end position="393"/>
    </location>
</feature>
<feature type="region of interest" description="Disordered" evidence="1">
    <location>
        <begin position="1"/>
        <end position="43"/>
    </location>
</feature>
<feature type="region of interest" description="Disordered" evidence="1">
    <location>
        <begin position="253"/>
        <end position="273"/>
    </location>
</feature>
<feature type="region of interest" description="Disordered" evidence="1">
    <location>
        <begin position="290"/>
        <end position="340"/>
    </location>
</feature>
<feature type="compositionally biased region" description="Basic and acidic residues" evidence="1">
    <location>
        <begin position="292"/>
        <end position="305"/>
    </location>
</feature>
<feature type="compositionally biased region" description="Acidic residues" evidence="1">
    <location>
        <begin position="308"/>
        <end position="330"/>
    </location>
</feature>
<feature type="compositionally biased region" description="Basic and acidic residues" evidence="1">
    <location>
        <begin position="331"/>
        <end position="340"/>
    </location>
</feature>
<feature type="modified residue" description="Phosphoserine" evidence="3">
    <location>
        <position position="308"/>
    </location>
</feature>
<feature type="modified residue" description="Phosphoserine" evidence="3">
    <location>
        <position position="310"/>
    </location>
</feature>
<sequence length="393" mass="45000">MVKLKIRAVQPPPNDSRSSTPATGPPPPIPKIKIKTREPKGPRLTKIRLKRVREPGLGYDSEASDREEDTYIEEQIILRLPPGEDCEYVRKAIENREVGRGADIWVKFKDQRRAVVHVNGHLYAAKLVDLPCIIESNKSFDKKVIFKAADICQMLIATERIEHENSVLNTQLKQADYIYPHGLTTPMHWVRQKRFRKRVSNRTIEAVENEVDRLLAMDERAESTSNELIDQAQLARDSSIALSEDTSFDGMAGLRGTSIDRDDQSVQTDMFDGMDEDDLAGQIEQGMLELSQDTRESTAEPRAAGEESASEEEEEEEEEEEEENEADDETRENKRQNRLVREFISELESSIQKRRKDADEATNPILRNRFLADVNRMVTELELKRTQLVDNPE</sequence>
<reference key="1">
    <citation type="journal article" date="1999" name="Genetics">
        <title>Characterization of the ptr6(+) gene in fission yeast: a possible involvement of a transcriptional coactivator TAF in nucleocytoplasmic transport of mRNA.</title>
        <authorList>
            <person name="Shibuya T."/>
            <person name="Tsuneyoshi S."/>
            <person name="Azad A.K."/>
            <person name="Urushiyama S."/>
            <person name="Ohshima Y."/>
            <person name="Tani T."/>
        </authorList>
    </citation>
    <scope>NUCLEOTIDE SEQUENCE [GENOMIC DNA]</scope>
    <scope>FUNCTION</scope>
    <scope>SUBCELLULAR LOCATION</scope>
    <source>
        <strain>972 / ATCC 24843</strain>
    </source>
</reference>
<reference key="2">
    <citation type="journal article" date="2002" name="Nature">
        <title>The genome sequence of Schizosaccharomyces pombe.</title>
        <authorList>
            <person name="Wood V."/>
            <person name="Gwilliam R."/>
            <person name="Rajandream M.A."/>
            <person name="Lyne M.H."/>
            <person name="Lyne R."/>
            <person name="Stewart A."/>
            <person name="Sgouros J.G."/>
            <person name="Peat N."/>
            <person name="Hayles J."/>
            <person name="Baker S.G."/>
            <person name="Basham D."/>
            <person name="Bowman S."/>
            <person name="Brooks K."/>
            <person name="Brown D."/>
            <person name="Brown S."/>
            <person name="Chillingworth T."/>
            <person name="Churcher C.M."/>
            <person name="Collins M."/>
            <person name="Connor R."/>
            <person name="Cronin A."/>
            <person name="Davis P."/>
            <person name="Feltwell T."/>
            <person name="Fraser A."/>
            <person name="Gentles S."/>
            <person name="Goble A."/>
            <person name="Hamlin N."/>
            <person name="Harris D.E."/>
            <person name="Hidalgo J."/>
            <person name="Hodgson G."/>
            <person name="Holroyd S."/>
            <person name="Hornsby T."/>
            <person name="Howarth S."/>
            <person name="Huckle E.J."/>
            <person name="Hunt S."/>
            <person name="Jagels K."/>
            <person name="James K.D."/>
            <person name="Jones L."/>
            <person name="Jones M."/>
            <person name="Leather S."/>
            <person name="McDonald S."/>
            <person name="McLean J."/>
            <person name="Mooney P."/>
            <person name="Moule S."/>
            <person name="Mungall K.L."/>
            <person name="Murphy L.D."/>
            <person name="Niblett D."/>
            <person name="Odell C."/>
            <person name="Oliver K."/>
            <person name="O'Neil S."/>
            <person name="Pearson D."/>
            <person name="Quail M.A."/>
            <person name="Rabbinowitsch E."/>
            <person name="Rutherford K.M."/>
            <person name="Rutter S."/>
            <person name="Saunders D."/>
            <person name="Seeger K."/>
            <person name="Sharp S."/>
            <person name="Skelton J."/>
            <person name="Simmonds M.N."/>
            <person name="Squares R."/>
            <person name="Squares S."/>
            <person name="Stevens K."/>
            <person name="Taylor K."/>
            <person name="Taylor R.G."/>
            <person name="Tivey A."/>
            <person name="Walsh S.V."/>
            <person name="Warren T."/>
            <person name="Whitehead S."/>
            <person name="Woodward J.R."/>
            <person name="Volckaert G."/>
            <person name="Aert R."/>
            <person name="Robben J."/>
            <person name="Grymonprez B."/>
            <person name="Weltjens I."/>
            <person name="Vanstreels E."/>
            <person name="Rieger M."/>
            <person name="Schaefer M."/>
            <person name="Mueller-Auer S."/>
            <person name="Gabel C."/>
            <person name="Fuchs M."/>
            <person name="Duesterhoeft A."/>
            <person name="Fritzc C."/>
            <person name="Holzer E."/>
            <person name="Moestl D."/>
            <person name="Hilbert H."/>
            <person name="Borzym K."/>
            <person name="Langer I."/>
            <person name="Beck A."/>
            <person name="Lehrach H."/>
            <person name="Reinhardt R."/>
            <person name="Pohl T.M."/>
            <person name="Eger P."/>
            <person name="Zimmermann W."/>
            <person name="Wedler H."/>
            <person name="Wambutt R."/>
            <person name="Purnelle B."/>
            <person name="Goffeau A."/>
            <person name="Cadieu E."/>
            <person name="Dreano S."/>
            <person name="Gloux S."/>
            <person name="Lelaure V."/>
            <person name="Mottier S."/>
            <person name="Galibert F."/>
            <person name="Aves S.J."/>
            <person name="Xiang Z."/>
            <person name="Hunt C."/>
            <person name="Moore K."/>
            <person name="Hurst S.M."/>
            <person name="Lucas M."/>
            <person name="Rochet M."/>
            <person name="Gaillardin C."/>
            <person name="Tallada V.A."/>
            <person name="Garzon A."/>
            <person name="Thode G."/>
            <person name="Daga R.R."/>
            <person name="Cruzado L."/>
            <person name="Jimenez J."/>
            <person name="Sanchez M."/>
            <person name="del Rey F."/>
            <person name="Benito J."/>
            <person name="Dominguez A."/>
            <person name="Revuelta J.L."/>
            <person name="Moreno S."/>
            <person name="Armstrong J."/>
            <person name="Forsburg S.L."/>
            <person name="Cerutti L."/>
            <person name="Lowe T."/>
            <person name="McCombie W.R."/>
            <person name="Paulsen I."/>
            <person name="Potashkin J."/>
            <person name="Shpakovski G.V."/>
            <person name="Ussery D."/>
            <person name="Barrell B.G."/>
            <person name="Nurse P."/>
        </authorList>
    </citation>
    <scope>NUCLEOTIDE SEQUENCE [LARGE SCALE GENOMIC DNA]</scope>
    <source>
        <strain>972 / ATCC 24843</strain>
    </source>
</reference>
<reference key="3">
    <citation type="journal article" date="2008" name="J. Proteome Res.">
        <title>Phosphoproteome analysis of fission yeast.</title>
        <authorList>
            <person name="Wilson-Grady J.T."/>
            <person name="Villen J."/>
            <person name="Gygi S.P."/>
        </authorList>
    </citation>
    <scope>PHOSPHORYLATION [LARGE SCALE ANALYSIS] AT SER-308 AND SER-310</scope>
    <scope>IDENTIFICATION BY MASS SPECTROMETRY</scope>
</reference>
<accession>O13701</accession>
<gene>
    <name type="primary">taf7</name>
    <name type="synonym">ptr6</name>
    <name type="ORF">SPAC13F5.02c</name>
</gene>
<dbReference type="EMBL" id="AB016928">
    <property type="protein sequence ID" value="BAA32487.1"/>
    <property type="molecule type" value="Genomic_DNA"/>
</dbReference>
<dbReference type="EMBL" id="CU329670">
    <property type="protein sequence ID" value="CAB11765.1"/>
    <property type="molecule type" value="Genomic_DNA"/>
</dbReference>
<dbReference type="PIR" id="T43401">
    <property type="entry name" value="T43401"/>
</dbReference>
<dbReference type="RefSeq" id="NP_593650.1">
    <property type="nucleotide sequence ID" value="NM_001019082.2"/>
</dbReference>
<dbReference type="SMR" id="O13701"/>
<dbReference type="BioGRID" id="279269">
    <property type="interactions" value="9"/>
</dbReference>
<dbReference type="FunCoup" id="O13701">
    <property type="interactions" value="246"/>
</dbReference>
<dbReference type="IntAct" id="O13701">
    <property type="interactions" value="3"/>
</dbReference>
<dbReference type="STRING" id="284812.O13701"/>
<dbReference type="iPTMnet" id="O13701"/>
<dbReference type="SwissPalm" id="O13701"/>
<dbReference type="PaxDb" id="4896-SPAC13F5.02c.1"/>
<dbReference type="EnsemblFungi" id="SPAC13F5.02c.1">
    <property type="protein sequence ID" value="SPAC13F5.02c.1:pep"/>
    <property type="gene ID" value="SPAC13F5.02c"/>
</dbReference>
<dbReference type="GeneID" id="2542822"/>
<dbReference type="KEGG" id="spo:2542822"/>
<dbReference type="PomBase" id="SPAC13F5.02c">
    <property type="gene designation" value="taf7"/>
</dbReference>
<dbReference type="VEuPathDB" id="FungiDB:SPAC13F5.02c"/>
<dbReference type="eggNOG" id="KOG4011">
    <property type="taxonomic scope" value="Eukaryota"/>
</dbReference>
<dbReference type="HOGENOM" id="CLU_016434_3_0_1"/>
<dbReference type="InParanoid" id="O13701"/>
<dbReference type="OMA" id="KWEKMQN"/>
<dbReference type="PhylomeDB" id="O13701"/>
<dbReference type="Reactome" id="R-SPO-674695">
    <property type="pathway name" value="RNA Polymerase II Pre-transcription Events"/>
</dbReference>
<dbReference type="Reactome" id="R-SPO-73776">
    <property type="pathway name" value="RNA Polymerase II Promoter Escape"/>
</dbReference>
<dbReference type="Reactome" id="R-SPO-73779">
    <property type="pathway name" value="RNA Polymerase II Transcription Pre-Initiation And Promoter Opening"/>
</dbReference>
<dbReference type="Reactome" id="R-SPO-75953">
    <property type="pathway name" value="RNA Polymerase II Transcription Initiation"/>
</dbReference>
<dbReference type="Reactome" id="R-SPO-76042">
    <property type="pathway name" value="RNA Polymerase II Transcription Initiation And Promoter Clearance"/>
</dbReference>
<dbReference type="PRO" id="PR:O13701"/>
<dbReference type="Proteomes" id="UP000002485">
    <property type="component" value="Chromosome I"/>
</dbReference>
<dbReference type="GO" id="GO:0005829">
    <property type="term" value="C:cytosol"/>
    <property type="evidence" value="ECO:0007005"/>
    <property type="project" value="PomBase"/>
</dbReference>
<dbReference type="GO" id="GO:0005634">
    <property type="term" value="C:nucleus"/>
    <property type="evidence" value="ECO:0000314"/>
    <property type="project" value="PomBase"/>
</dbReference>
<dbReference type="GO" id="GO:0005669">
    <property type="term" value="C:transcription factor TFIID complex"/>
    <property type="evidence" value="ECO:0000314"/>
    <property type="project" value="PomBase"/>
</dbReference>
<dbReference type="GO" id="GO:0016251">
    <property type="term" value="F:RNA polymerase II general transcription initiation factor activity"/>
    <property type="evidence" value="ECO:0000269"/>
    <property type="project" value="PomBase"/>
</dbReference>
<dbReference type="GO" id="GO:0051028">
    <property type="term" value="P:mRNA transport"/>
    <property type="evidence" value="ECO:0007669"/>
    <property type="project" value="UniProtKB-KW"/>
</dbReference>
<dbReference type="GO" id="GO:0051123">
    <property type="term" value="P:RNA polymerase II preinitiation complex assembly"/>
    <property type="evidence" value="ECO:0000318"/>
    <property type="project" value="GO_Central"/>
</dbReference>
<dbReference type="GO" id="GO:0006367">
    <property type="term" value="P:transcription initiation at RNA polymerase II promoter"/>
    <property type="evidence" value="ECO:0000269"/>
    <property type="project" value="PomBase"/>
</dbReference>
<dbReference type="CDD" id="cd08047">
    <property type="entry name" value="TAF7"/>
    <property type="match status" value="1"/>
</dbReference>
<dbReference type="InterPro" id="IPR037817">
    <property type="entry name" value="TAF7"/>
</dbReference>
<dbReference type="InterPro" id="IPR006751">
    <property type="entry name" value="TAFII55_prot_cons_reg"/>
</dbReference>
<dbReference type="PANTHER" id="PTHR12228:SF0">
    <property type="entry name" value="TATA-BOX BINDING PROTEIN ASSOCIATED FACTOR 7"/>
    <property type="match status" value="1"/>
</dbReference>
<dbReference type="PANTHER" id="PTHR12228">
    <property type="entry name" value="TRANSCRIPTION INITIATION FACTOR TFIID 55 KD SUBUNIT-RELATED"/>
    <property type="match status" value="1"/>
</dbReference>
<dbReference type="Pfam" id="PF04658">
    <property type="entry name" value="TAFII55_N"/>
    <property type="match status" value="1"/>
</dbReference>
<dbReference type="SMART" id="SM01370">
    <property type="entry name" value="TAFII55_N"/>
    <property type="match status" value="1"/>
</dbReference>
<name>TAF7_SCHPO</name>
<comment type="function">
    <text evidence="2">TAFs are components of the transcription factor IID (TFIID) complex that are essential for mediating regulation of RNA polymerase transcription. Also involved in the transport of mRNA from the nucleus to the cytoplasm.</text>
</comment>
<comment type="subunit">
    <text>TFIID is composed of TATA binding protein (TBP) and a number of TBP-associated factors (TAFs).</text>
</comment>
<comment type="subcellular location">
    <subcellularLocation>
        <location evidence="2">Nucleus</location>
    </subcellularLocation>
</comment>
<comment type="similarity">
    <text evidence="4">Belongs to the TAF7 family.</text>
</comment>